<organism>
    <name type="scientific">Halalkalibacterium halodurans (strain ATCC BAA-125 / DSM 18197 / FERM 7344 / JCM 9153 / C-125)</name>
    <name type="common">Bacillus halodurans</name>
    <dbReference type="NCBI Taxonomy" id="272558"/>
    <lineage>
        <taxon>Bacteria</taxon>
        <taxon>Bacillati</taxon>
        <taxon>Bacillota</taxon>
        <taxon>Bacilli</taxon>
        <taxon>Bacillales</taxon>
        <taxon>Bacillaceae</taxon>
        <taxon>Halalkalibacterium (ex Joshi et al. 2022)</taxon>
    </lineage>
</organism>
<accession>Q9KGF4</accession>
<proteinExistence type="inferred from homology"/>
<sequence>MAIQVFNSLTRKKEPFVPLEEGKVKMYVCGPTVYNYIHIGNARPPIVYDMIRRYLKYRGYEVLFVSNFTDVDDKIIRVANELGEDVFAVANRFIEAYKQDTSALGVLEADHHPRVTETMSEIISFIRVLEEKGYAYEQGGDVYFRTRKFKEYGKLSAQSIDDLLSGARIEVDERKEDPLDFVLWKAAKEGEVSWDSPWGKGRPGWHIECSAMVKKYLGDTIDIHAGGQDLKFPHHENEIAQSECMTGKPMANYWLHNGFINLDNEKMSKSLGNVVLANEMIRQHSAEVLRFFMLSAHYRSPINFSDELLEGAKRGLERLQTAVSSLVHRLQESADFGGTEPWLERIDEFRGRFIEEMDDDFNSANGIAVLFDLAKEANRYLREEQTSKAVLQSFIDLFNELGGVLGVTLNRQEELLDEEIERLIEERNEARKAKNFQRADDIRDQLKAEGIILEDTPQGVRWKRGS</sequence>
<keyword id="KW-0030">Aminoacyl-tRNA synthetase</keyword>
<keyword id="KW-0067">ATP-binding</keyword>
<keyword id="KW-0963">Cytoplasm</keyword>
<keyword id="KW-0436">Ligase</keyword>
<keyword id="KW-0479">Metal-binding</keyword>
<keyword id="KW-0547">Nucleotide-binding</keyword>
<keyword id="KW-0597">Phosphoprotein</keyword>
<keyword id="KW-0648">Protein biosynthesis</keyword>
<keyword id="KW-1185">Reference proteome</keyword>
<keyword id="KW-0862">Zinc</keyword>
<gene>
    <name type="primary">cysS</name>
    <name type="ordered locus">BH0111</name>
</gene>
<evidence type="ECO:0000250" key="1"/>
<evidence type="ECO:0000305" key="2"/>
<dbReference type="EC" id="6.1.1.16"/>
<dbReference type="EMBL" id="BA000004">
    <property type="protein sequence ID" value="BAB03830.1"/>
    <property type="molecule type" value="Genomic_DNA"/>
</dbReference>
<dbReference type="PIR" id="G83663">
    <property type="entry name" value="G83663"/>
</dbReference>
<dbReference type="RefSeq" id="WP_010896294.1">
    <property type="nucleotide sequence ID" value="NC_002570.2"/>
</dbReference>
<dbReference type="SMR" id="Q9KGF4"/>
<dbReference type="STRING" id="272558.gene:10725951"/>
<dbReference type="GeneID" id="87595654"/>
<dbReference type="KEGG" id="bha:BH0111"/>
<dbReference type="eggNOG" id="COG0215">
    <property type="taxonomic scope" value="Bacteria"/>
</dbReference>
<dbReference type="HOGENOM" id="CLU_013528_0_1_9"/>
<dbReference type="OrthoDB" id="9815130at2"/>
<dbReference type="Proteomes" id="UP000001258">
    <property type="component" value="Chromosome"/>
</dbReference>
<dbReference type="GO" id="GO:0005829">
    <property type="term" value="C:cytosol"/>
    <property type="evidence" value="ECO:0007669"/>
    <property type="project" value="TreeGrafter"/>
</dbReference>
<dbReference type="GO" id="GO:0005524">
    <property type="term" value="F:ATP binding"/>
    <property type="evidence" value="ECO:0007669"/>
    <property type="project" value="UniProtKB-UniRule"/>
</dbReference>
<dbReference type="GO" id="GO:0004817">
    <property type="term" value="F:cysteine-tRNA ligase activity"/>
    <property type="evidence" value="ECO:0007669"/>
    <property type="project" value="UniProtKB-UniRule"/>
</dbReference>
<dbReference type="GO" id="GO:0008270">
    <property type="term" value="F:zinc ion binding"/>
    <property type="evidence" value="ECO:0007669"/>
    <property type="project" value="UniProtKB-UniRule"/>
</dbReference>
<dbReference type="GO" id="GO:0006423">
    <property type="term" value="P:cysteinyl-tRNA aminoacylation"/>
    <property type="evidence" value="ECO:0007669"/>
    <property type="project" value="UniProtKB-UniRule"/>
</dbReference>
<dbReference type="CDD" id="cd00672">
    <property type="entry name" value="CysRS_core"/>
    <property type="match status" value="1"/>
</dbReference>
<dbReference type="FunFam" id="3.40.50.620:FF:000009">
    <property type="entry name" value="Cysteine--tRNA ligase"/>
    <property type="match status" value="1"/>
</dbReference>
<dbReference type="Gene3D" id="1.20.120.1910">
    <property type="entry name" value="Cysteine-tRNA ligase, C-terminal anti-codon recognition domain"/>
    <property type="match status" value="1"/>
</dbReference>
<dbReference type="Gene3D" id="3.40.50.620">
    <property type="entry name" value="HUPs"/>
    <property type="match status" value="1"/>
</dbReference>
<dbReference type="HAMAP" id="MF_00041">
    <property type="entry name" value="Cys_tRNA_synth"/>
    <property type="match status" value="1"/>
</dbReference>
<dbReference type="InterPro" id="IPR015803">
    <property type="entry name" value="Cys-tRNA-ligase"/>
</dbReference>
<dbReference type="InterPro" id="IPR015273">
    <property type="entry name" value="Cys-tRNA-synt_Ia_DALR"/>
</dbReference>
<dbReference type="InterPro" id="IPR024909">
    <property type="entry name" value="Cys-tRNA/MSH_ligase"/>
</dbReference>
<dbReference type="InterPro" id="IPR056411">
    <property type="entry name" value="CysS_C"/>
</dbReference>
<dbReference type="InterPro" id="IPR014729">
    <property type="entry name" value="Rossmann-like_a/b/a_fold"/>
</dbReference>
<dbReference type="InterPro" id="IPR032678">
    <property type="entry name" value="tRNA-synt_1_cat_dom"/>
</dbReference>
<dbReference type="InterPro" id="IPR009080">
    <property type="entry name" value="tRNAsynth_Ia_anticodon-bd"/>
</dbReference>
<dbReference type="NCBIfam" id="TIGR00435">
    <property type="entry name" value="cysS"/>
    <property type="match status" value="1"/>
</dbReference>
<dbReference type="PANTHER" id="PTHR10890:SF3">
    <property type="entry name" value="CYSTEINE--TRNA LIGASE, CYTOPLASMIC"/>
    <property type="match status" value="1"/>
</dbReference>
<dbReference type="PANTHER" id="PTHR10890">
    <property type="entry name" value="CYSTEINYL-TRNA SYNTHETASE"/>
    <property type="match status" value="1"/>
</dbReference>
<dbReference type="Pfam" id="PF23493">
    <property type="entry name" value="CysS_C"/>
    <property type="match status" value="1"/>
</dbReference>
<dbReference type="Pfam" id="PF09190">
    <property type="entry name" value="DALR_2"/>
    <property type="match status" value="1"/>
</dbReference>
<dbReference type="Pfam" id="PF01406">
    <property type="entry name" value="tRNA-synt_1e"/>
    <property type="match status" value="1"/>
</dbReference>
<dbReference type="PRINTS" id="PR00983">
    <property type="entry name" value="TRNASYNTHCYS"/>
</dbReference>
<dbReference type="SMART" id="SM00840">
    <property type="entry name" value="DALR_2"/>
    <property type="match status" value="1"/>
</dbReference>
<dbReference type="SUPFAM" id="SSF47323">
    <property type="entry name" value="Anticodon-binding domain of a subclass of class I aminoacyl-tRNA synthetases"/>
    <property type="match status" value="1"/>
</dbReference>
<dbReference type="SUPFAM" id="SSF52374">
    <property type="entry name" value="Nucleotidylyl transferase"/>
    <property type="match status" value="1"/>
</dbReference>
<comment type="catalytic activity">
    <reaction>
        <text>tRNA(Cys) + L-cysteine + ATP = L-cysteinyl-tRNA(Cys) + AMP + diphosphate</text>
        <dbReference type="Rhea" id="RHEA:17773"/>
        <dbReference type="Rhea" id="RHEA-COMP:9661"/>
        <dbReference type="Rhea" id="RHEA-COMP:9679"/>
        <dbReference type="ChEBI" id="CHEBI:30616"/>
        <dbReference type="ChEBI" id="CHEBI:33019"/>
        <dbReference type="ChEBI" id="CHEBI:35235"/>
        <dbReference type="ChEBI" id="CHEBI:78442"/>
        <dbReference type="ChEBI" id="CHEBI:78517"/>
        <dbReference type="ChEBI" id="CHEBI:456215"/>
        <dbReference type="EC" id="6.1.1.16"/>
    </reaction>
</comment>
<comment type="cofactor">
    <cofactor evidence="1">
        <name>Zn(2+)</name>
        <dbReference type="ChEBI" id="CHEBI:29105"/>
    </cofactor>
    <text evidence="1">Binds 1 zinc ion per subunit.</text>
</comment>
<comment type="subunit">
    <text evidence="1">Monomer.</text>
</comment>
<comment type="subcellular location">
    <subcellularLocation>
        <location evidence="1">Cytoplasm</location>
    </subcellularLocation>
</comment>
<comment type="similarity">
    <text evidence="2">Belongs to the class-I aminoacyl-tRNA synthetase family.</text>
</comment>
<feature type="chain" id="PRO_0000159348" description="Cysteine--tRNA ligase">
    <location>
        <begin position="1"/>
        <end position="466"/>
    </location>
</feature>
<feature type="short sequence motif" description="'HIGH' region">
    <location>
        <begin position="31"/>
        <end position="41"/>
    </location>
</feature>
<feature type="short sequence motif" description="'KMSKS' region">
    <location>
        <begin position="266"/>
        <end position="270"/>
    </location>
</feature>
<feature type="binding site" evidence="1">
    <location>
        <position position="29"/>
    </location>
    <ligand>
        <name>Zn(2+)</name>
        <dbReference type="ChEBI" id="CHEBI:29105"/>
    </ligand>
</feature>
<feature type="binding site" evidence="1">
    <location>
        <position position="209"/>
    </location>
    <ligand>
        <name>Zn(2+)</name>
        <dbReference type="ChEBI" id="CHEBI:29105"/>
    </ligand>
</feature>
<feature type="binding site" evidence="1">
    <location>
        <position position="234"/>
    </location>
    <ligand>
        <name>Zn(2+)</name>
        <dbReference type="ChEBI" id="CHEBI:29105"/>
    </ligand>
</feature>
<feature type="binding site" evidence="1">
    <location>
        <position position="238"/>
    </location>
    <ligand>
        <name>Zn(2+)</name>
        <dbReference type="ChEBI" id="CHEBI:29105"/>
    </ligand>
</feature>
<feature type="binding site" evidence="1">
    <location>
        <position position="269"/>
    </location>
    <ligand>
        <name>ATP</name>
        <dbReference type="ChEBI" id="CHEBI:30616"/>
    </ligand>
</feature>
<feature type="modified residue" description="Phosphoserine" evidence="1">
    <location>
        <position position="270"/>
    </location>
</feature>
<protein>
    <recommendedName>
        <fullName>Cysteine--tRNA ligase</fullName>
        <ecNumber>6.1.1.16</ecNumber>
    </recommendedName>
    <alternativeName>
        <fullName>Cysteinyl-tRNA synthetase</fullName>
        <shortName>CysRS</shortName>
    </alternativeName>
</protein>
<name>SYC_HALH5</name>
<reference key="1">
    <citation type="journal article" date="2000" name="Nucleic Acids Res.">
        <title>Complete genome sequence of the alkaliphilic bacterium Bacillus halodurans and genomic sequence comparison with Bacillus subtilis.</title>
        <authorList>
            <person name="Takami H."/>
            <person name="Nakasone K."/>
            <person name="Takaki Y."/>
            <person name="Maeno G."/>
            <person name="Sasaki R."/>
            <person name="Masui N."/>
            <person name="Fuji F."/>
            <person name="Hirama C."/>
            <person name="Nakamura Y."/>
            <person name="Ogasawara N."/>
            <person name="Kuhara S."/>
            <person name="Horikoshi K."/>
        </authorList>
    </citation>
    <scope>NUCLEOTIDE SEQUENCE [LARGE SCALE GENOMIC DNA]</scope>
    <source>
        <strain>ATCC BAA-125 / DSM 18197 / FERM 7344 / JCM 9153 / C-125</strain>
    </source>
</reference>